<comment type="function">
    <text evidence="1">Methylates ribosomal protein L11.</text>
</comment>
<comment type="catalytic activity">
    <reaction evidence="1">
        <text>L-lysyl-[protein] + 3 S-adenosyl-L-methionine = N(6),N(6),N(6)-trimethyl-L-lysyl-[protein] + 3 S-adenosyl-L-homocysteine + 3 H(+)</text>
        <dbReference type="Rhea" id="RHEA:54192"/>
        <dbReference type="Rhea" id="RHEA-COMP:9752"/>
        <dbReference type="Rhea" id="RHEA-COMP:13826"/>
        <dbReference type="ChEBI" id="CHEBI:15378"/>
        <dbReference type="ChEBI" id="CHEBI:29969"/>
        <dbReference type="ChEBI" id="CHEBI:57856"/>
        <dbReference type="ChEBI" id="CHEBI:59789"/>
        <dbReference type="ChEBI" id="CHEBI:61961"/>
    </reaction>
</comment>
<comment type="subcellular location">
    <subcellularLocation>
        <location evidence="1">Cytoplasm</location>
    </subcellularLocation>
</comment>
<comment type="similarity">
    <text evidence="1">Belongs to the methyltransferase superfamily. PrmA family.</text>
</comment>
<gene>
    <name evidence="1" type="primary">prmA</name>
    <name type="ordered locus">Sputcn32_3442</name>
</gene>
<keyword id="KW-0963">Cytoplasm</keyword>
<keyword id="KW-0489">Methyltransferase</keyword>
<keyword id="KW-0949">S-adenosyl-L-methionine</keyword>
<keyword id="KW-0808">Transferase</keyword>
<name>PRMA_SHEPC</name>
<accession>A4YB19</accession>
<organism>
    <name type="scientific">Shewanella putrefaciens (strain CN-32 / ATCC BAA-453)</name>
    <dbReference type="NCBI Taxonomy" id="319224"/>
    <lineage>
        <taxon>Bacteria</taxon>
        <taxon>Pseudomonadati</taxon>
        <taxon>Pseudomonadota</taxon>
        <taxon>Gammaproteobacteria</taxon>
        <taxon>Alteromonadales</taxon>
        <taxon>Shewanellaceae</taxon>
        <taxon>Shewanella</taxon>
    </lineage>
</organism>
<protein>
    <recommendedName>
        <fullName evidence="1">Ribosomal protein L11 methyltransferase</fullName>
        <shortName evidence="1">L11 Mtase</shortName>
        <ecNumber evidence="1">2.1.1.-</ecNumber>
    </recommendedName>
</protein>
<proteinExistence type="inferred from homology"/>
<feature type="chain" id="PRO_1000046089" description="Ribosomal protein L11 methyltransferase">
    <location>
        <begin position="1"/>
        <end position="293"/>
    </location>
</feature>
<feature type="binding site" evidence="1">
    <location>
        <position position="145"/>
    </location>
    <ligand>
        <name>S-adenosyl-L-methionine</name>
        <dbReference type="ChEBI" id="CHEBI:59789"/>
    </ligand>
</feature>
<feature type="binding site" evidence="1">
    <location>
        <position position="166"/>
    </location>
    <ligand>
        <name>S-adenosyl-L-methionine</name>
        <dbReference type="ChEBI" id="CHEBI:59789"/>
    </ligand>
</feature>
<feature type="binding site" evidence="1">
    <location>
        <position position="188"/>
    </location>
    <ligand>
        <name>S-adenosyl-L-methionine</name>
        <dbReference type="ChEBI" id="CHEBI:59789"/>
    </ligand>
</feature>
<feature type="binding site" evidence="1">
    <location>
        <position position="230"/>
    </location>
    <ligand>
        <name>S-adenosyl-L-methionine</name>
        <dbReference type="ChEBI" id="CHEBI:59789"/>
    </ligand>
</feature>
<evidence type="ECO:0000255" key="1">
    <source>
        <dbReference type="HAMAP-Rule" id="MF_00735"/>
    </source>
</evidence>
<dbReference type="EC" id="2.1.1.-" evidence="1"/>
<dbReference type="EMBL" id="CP000681">
    <property type="protein sequence ID" value="ABP77152.1"/>
    <property type="molecule type" value="Genomic_DNA"/>
</dbReference>
<dbReference type="SMR" id="A4YB19"/>
<dbReference type="STRING" id="319224.Sputcn32_3442"/>
<dbReference type="KEGG" id="spc:Sputcn32_3442"/>
<dbReference type="eggNOG" id="COG2264">
    <property type="taxonomic scope" value="Bacteria"/>
</dbReference>
<dbReference type="HOGENOM" id="CLU_049382_4_1_6"/>
<dbReference type="GO" id="GO:0005829">
    <property type="term" value="C:cytosol"/>
    <property type="evidence" value="ECO:0007669"/>
    <property type="project" value="TreeGrafter"/>
</dbReference>
<dbReference type="GO" id="GO:0016279">
    <property type="term" value="F:protein-lysine N-methyltransferase activity"/>
    <property type="evidence" value="ECO:0007669"/>
    <property type="project" value="TreeGrafter"/>
</dbReference>
<dbReference type="GO" id="GO:0032259">
    <property type="term" value="P:methylation"/>
    <property type="evidence" value="ECO:0007669"/>
    <property type="project" value="UniProtKB-KW"/>
</dbReference>
<dbReference type="CDD" id="cd02440">
    <property type="entry name" value="AdoMet_MTases"/>
    <property type="match status" value="1"/>
</dbReference>
<dbReference type="Gene3D" id="3.40.50.150">
    <property type="entry name" value="Vaccinia Virus protein VP39"/>
    <property type="match status" value="1"/>
</dbReference>
<dbReference type="HAMAP" id="MF_00735">
    <property type="entry name" value="Methyltr_PrmA"/>
    <property type="match status" value="1"/>
</dbReference>
<dbReference type="InterPro" id="IPR050078">
    <property type="entry name" value="Ribosomal_L11_MeTrfase_PrmA"/>
</dbReference>
<dbReference type="InterPro" id="IPR004498">
    <property type="entry name" value="Ribosomal_PrmA_MeTrfase"/>
</dbReference>
<dbReference type="InterPro" id="IPR029063">
    <property type="entry name" value="SAM-dependent_MTases_sf"/>
</dbReference>
<dbReference type="NCBIfam" id="TIGR00406">
    <property type="entry name" value="prmA"/>
    <property type="match status" value="1"/>
</dbReference>
<dbReference type="PANTHER" id="PTHR43648">
    <property type="entry name" value="ELECTRON TRANSFER FLAVOPROTEIN BETA SUBUNIT LYSINE METHYLTRANSFERASE"/>
    <property type="match status" value="1"/>
</dbReference>
<dbReference type="PANTHER" id="PTHR43648:SF1">
    <property type="entry name" value="ELECTRON TRANSFER FLAVOPROTEIN BETA SUBUNIT LYSINE METHYLTRANSFERASE"/>
    <property type="match status" value="1"/>
</dbReference>
<dbReference type="Pfam" id="PF06325">
    <property type="entry name" value="PrmA"/>
    <property type="match status" value="1"/>
</dbReference>
<dbReference type="PIRSF" id="PIRSF000401">
    <property type="entry name" value="RPL11_MTase"/>
    <property type="match status" value="1"/>
</dbReference>
<dbReference type="SUPFAM" id="SSF53335">
    <property type="entry name" value="S-adenosyl-L-methionine-dependent methyltransferases"/>
    <property type="match status" value="1"/>
</dbReference>
<reference key="1">
    <citation type="submission" date="2007-04" db="EMBL/GenBank/DDBJ databases">
        <title>Complete sequence of Shewanella putrefaciens CN-32.</title>
        <authorList>
            <consortium name="US DOE Joint Genome Institute"/>
            <person name="Copeland A."/>
            <person name="Lucas S."/>
            <person name="Lapidus A."/>
            <person name="Barry K."/>
            <person name="Detter J.C."/>
            <person name="Glavina del Rio T."/>
            <person name="Hammon N."/>
            <person name="Israni S."/>
            <person name="Dalin E."/>
            <person name="Tice H."/>
            <person name="Pitluck S."/>
            <person name="Chain P."/>
            <person name="Malfatti S."/>
            <person name="Shin M."/>
            <person name="Vergez L."/>
            <person name="Schmutz J."/>
            <person name="Larimer F."/>
            <person name="Land M."/>
            <person name="Hauser L."/>
            <person name="Kyrpides N."/>
            <person name="Mikhailova N."/>
            <person name="Romine M.F."/>
            <person name="Fredrickson J."/>
            <person name="Tiedje J."/>
            <person name="Richardson P."/>
        </authorList>
    </citation>
    <scope>NUCLEOTIDE SEQUENCE [LARGE SCALE GENOMIC DNA]</scope>
    <source>
        <strain>CN-32 / ATCC BAA-453</strain>
    </source>
</reference>
<sequence>MPWIQLRINTNSDDAETISDLLMEEGSVSITFEDGKDTPIFEPKLGETPLWRDTVVVALFEADTDLTPTIEMLKTLPFLGDNFSHKIEQIEDKDWVREWMDNFHPIQFGSRLWICPSWREIPDPTAVNVILDPGLAFGTGTHPTTALCLEWLDSLDLSNEEVIDFGCGSGILAVAALKLGAKKVTGIDIDYQAIDASRANAERNNVADKLALYLPEDQPADLKADVLVANILAGPLRELAPLIAERVKSGGKLALSGLLKEQAQEISDFYSQWFDMDEAAHKEDWSRLTGKRK</sequence>